<gene>
    <name evidence="1" type="primary">trpB</name>
    <name type="ordered locus">BB3774</name>
</gene>
<keyword id="KW-0028">Amino-acid biosynthesis</keyword>
<keyword id="KW-0057">Aromatic amino acid biosynthesis</keyword>
<keyword id="KW-0456">Lyase</keyword>
<keyword id="KW-0663">Pyridoxal phosphate</keyword>
<keyword id="KW-0822">Tryptophan biosynthesis</keyword>
<sequence length="399" mass="43365">MKPYDLPDARGHFGPYGGVFVAETLMHALDELRAAYDQCRVDPSFIDEFNYELKHFVGRPSPVYHASRWSQRLGGAQIWFKREDLNHTGAHKVNNCIGQALLARRMGKPRVIAETGAGQHGVATATVAARYGMECVVFMGSEDVRRQASNVYRMKLLGATVVPVDSGSRTLKDALNEAMRDWVTNIENTFYIIGTVAGPDPYPRMVRDFQTVIGQECLTQMPEVIGRQPDYVVAAVGGGSNAMGIFHPYIPYENVRLIGVEAAGEGMETGRHAASLAAGQIGVLHGNRTYVMQNADGQVQETHSVSAGLDYPGVGPEHAWLKDSGRAEYAGITDDEALAAFHDCCRIEGIMPALESAHAIAQAVKMAPALSKDKVILVNLSGRGDKDMHTVAERAGLQL</sequence>
<evidence type="ECO:0000255" key="1">
    <source>
        <dbReference type="HAMAP-Rule" id="MF_00133"/>
    </source>
</evidence>
<accession>Q7WD04</accession>
<name>TRPB_BORBR</name>
<proteinExistence type="inferred from homology"/>
<comment type="function">
    <text evidence="1">The beta subunit is responsible for the synthesis of L-tryptophan from indole and L-serine.</text>
</comment>
<comment type="catalytic activity">
    <reaction evidence="1">
        <text>(1S,2R)-1-C-(indol-3-yl)glycerol 3-phosphate + L-serine = D-glyceraldehyde 3-phosphate + L-tryptophan + H2O</text>
        <dbReference type="Rhea" id="RHEA:10532"/>
        <dbReference type="ChEBI" id="CHEBI:15377"/>
        <dbReference type="ChEBI" id="CHEBI:33384"/>
        <dbReference type="ChEBI" id="CHEBI:57912"/>
        <dbReference type="ChEBI" id="CHEBI:58866"/>
        <dbReference type="ChEBI" id="CHEBI:59776"/>
        <dbReference type="EC" id="4.2.1.20"/>
    </reaction>
</comment>
<comment type="cofactor">
    <cofactor evidence="1">
        <name>pyridoxal 5'-phosphate</name>
        <dbReference type="ChEBI" id="CHEBI:597326"/>
    </cofactor>
</comment>
<comment type="pathway">
    <text evidence="1">Amino-acid biosynthesis; L-tryptophan biosynthesis; L-tryptophan from chorismate: step 5/5.</text>
</comment>
<comment type="subunit">
    <text evidence="1">Tetramer of two alpha and two beta chains.</text>
</comment>
<comment type="similarity">
    <text evidence="1">Belongs to the TrpB family.</text>
</comment>
<reference key="1">
    <citation type="journal article" date="2003" name="Nat. Genet.">
        <title>Comparative analysis of the genome sequences of Bordetella pertussis, Bordetella parapertussis and Bordetella bronchiseptica.</title>
        <authorList>
            <person name="Parkhill J."/>
            <person name="Sebaihia M."/>
            <person name="Preston A."/>
            <person name="Murphy L.D."/>
            <person name="Thomson N.R."/>
            <person name="Harris D.E."/>
            <person name="Holden M.T.G."/>
            <person name="Churcher C.M."/>
            <person name="Bentley S.D."/>
            <person name="Mungall K.L."/>
            <person name="Cerdeno-Tarraga A.-M."/>
            <person name="Temple L."/>
            <person name="James K.D."/>
            <person name="Harris B."/>
            <person name="Quail M.A."/>
            <person name="Achtman M."/>
            <person name="Atkin R."/>
            <person name="Baker S."/>
            <person name="Basham D."/>
            <person name="Bason N."/>
            <person name="Cherevach I."/>
            <person name="Chillingworth T."/>
            <person name="Collins M."/>
            <person name="Cronin A."/>
            <person name="Davis P."/>
            <person name="Doggett J."/>
            <person name="Feltwell T."/>
            <person name="Goble A."/>
            <person name="Hamlin N."/>
            <person name="Hauser H."/>
            <person name="Holroyd S."/>
            <person name="Jagels K."/>
            <person name="Leather S."/>
            <person name="Moule S."/>
            <person name="Norberczak H."/>
            <person name="O'Neil S."/>
            <person name="Ormond D."/>
            <person name="Price C."/>
            <person name="Rabbinowitsch E."/>
            <person name="Rutter S."/>
            <person name="Sanders M."/>
            <person name="Saunders D."/>
            <person name="Seeger K."/>
            <person name="Sharp S."/>
            <person name="Simmonds M."/>
            <person name="Skelton J."/>
            <person name="Squares R."/>
            <person name="Squares S."/>
            <person name="Stevens K."/>
            <person name="Unwin L."/>
            <person name="Whitehead S."/>
            <person name="Barrell B.G."/>
            <person name="Maskell D.J."/>
        </authorList>
    </citation>
    <scope>NUCLEOTIDE SEQUENCE [LARGE SCALE GENOMIC DNA]</scope>
    <source>
        <strain>ATCC BAA-588 / NCTC 13252 / RB50</strain>
    </source>
</reference>
<dbReference type="EC" id="4.2.1.20" evidence="1"/>
<dbReference type="EMBL" id="BX640448">
    <property type="protein sequence ID" value="CAE35748.1"/>
    <property type="molecule type" value="Genomic_DNA"/>
</dbReference>
<dbReference type="RefSeq" id="WP_003813845.1">
    <property type="nucleotide sequence ID" value="NC_002927.3"/>
</dbReference>
<dbReference type="SMR" id="Q7WD04"/>
<dbReference type="GeneID" id="56477743"/>
<dbReference type="KEGG" id="bbr:BB3774"/>
<dbReference type="eggNOG" id="COG0133">
    <property type="taxonomic scope" value="Bacteria"/>
</dbReference>
<dbReference type="HOGENOM" id="CLU_016734_3_1_4"/>
<dbReference type="UniPathway" id="UPA00035">
    <property type="reaction ID" value="UER00044"/>
</dbReference>
<dbReference type="Proteomes" id="UP000001027">
    <property type="component" value="Chromosome"/>
</dbReference>
<dbReference type="GO" id="GO:0005737">
    <property type="term" value="C:cytoplasm"/>
    <property type="evidence" value="ECO:0007669"/>
    <property type="project" value="TreeGrafter"/>
</dbReference>
<dbReference type="GO" id="GO:0004834">
    <property type="term" value="F:tryptophan synthase activity"/>
    <property type="evidence" value="ECO:0007669"/>
    <property type="project" value="UniProtKB-UniRule"/>
</dbReference>
<dbReference type="CDD" id="cd06446">
    <property type="entry name" value="Trp-synth_B"/>
    <property type="match status" value="1"/>
</dbReference>
<dbReference type="FunFam" id="3.40.50.1100:FF:000001">
    <property type="entry name" value="Tryptophan synthase beta chain"/>
    <property type="match status" value="1"/>
</dbReference>
<dbReference type="FunFam" id="3.40.50.1100:FF:000004">
    <property type="entry name" value="Tryptophan synthase beta chain"/>
    <property type="match status" value="1"/>
</dbReference>
<dbReference type="Gene3D" id="3.40.50.1100">
    <property type="match status" value="2"/>
</dbReference>
<dbReference type="HAMAP" id="MF_00133">
    <property type="entry name" value="Trp_synth_beta"/>
    <property type="match status" value="1"/>
</dbReference>
<dbReference type="InterPro" id="IPR006653">
    <property type="entry name" value="Trp_synth_b_CS"/>
</dbReference>
<dbReference type="InterPro" id="IPR006654">
    <property type="entry name" value="Trp_synth_beta"/>
</dbReference>
<dbReference type="InterPro" id="IPR023026">
    <property type="entry name" value="Trp_synth_beta/beta-like"/>
</dbReference>
<dbReference type="InterPro" id="IPR001926">
    <property type="entry name" value="TrpB-like_PALP"/>
</dbReference>
<dbReference type="InterPro" id="IPR036052">
    <property type="entry name" value="TrpB-like_PALP_sf"/>
</dbReference>
<dbReference type="NCBIfam" id="TIGR00263">
    <property type="entry name" value="trpB"/>
    <property type="match status" value="1"/>
</dbReference>
<dbReference type="PANTHER" id="PTHR48077:SF3">
    <property type="entry name" value="TRYPTOPHAN SYNTHASE"/>
    <property type="match status" value="1"/>
</dbReference>
<dbReference type="PANTHER" id="PTHR48077">
    <property type="entry name" value="TRYPTOPHAN SYNTHASE-RELATED"/>
    <property type="match status" value="1"/>
</dbReference>
<dbReference type="Pfam" id="PF00291">
    <property type="entry name" value="PALP"/>
    <property type="match status" value="1"/>
</dbReference>
<dbReference type="PIRSF" id="PIRSF001413">
    <property type="entry name" value="Trp_syn_beta"/>
    <property type="match status" value="1"/>
</dbReference>
<dbReference type="SUPFAM" id="SSF53686">
    <property type="entry name" value="Tryptophan synthase beta subunit-like PLP-dependent enzymes"/>
    <property type="match status" value="1"/>
</dbReference>
<dbReference type="PROSITE" id="PS00168">
    <property type="entry name" value="TRP_SYNTHASE_BETA"/>
    <property type="match status" value="1"/>
</dbReference>
<organism>
    <name type="scientific">Bordetella bronchiseptica (strain ATCC BAA-588 / NCTC 13252 / RB50)</name>
    <name type="common">Alcaligenes bronchisepticus</name>
    <dbReference type="NCBI Taxonomy" id="257310"/>
    <lineage>
        <taxon>Bacteria</taxon>
        <taxon>Pseudomonadati</taxon>
        <taxon>Pseudomonadota</taxon>
        <taxon>Betaproteobacteria</taxon>
        <taxon>Burkholderiales</taxon>
        <taxon>Alcaligenaceae</taxon>
        <taxon>Bordetella</taxon>
    </lineage>
</organism>
<protein>
    <recommendedName>
        <fullName evidence="1">Tryptophan synthase beta chain</fullName>
        <ecNumber evidence="1">4.2.1.20</ecNumber>
    </recommendedName>
</protein>
<feature type="chain" id="PRO_0000098920" description="Tryptophan synthase beta chain">
    <location>
        <begin position="1"/>
        <end position="399"/>
    </location>
</feature>
<feature type="modified residue" description="N6-(pyridoxal phosphate)lysine" evidence="1">
    <location>
        <position position="92"/>
    </location>
</feature>